<keyword id="KW-0436">Ligase</keyword>
<keyword id="KW-0596">Phosphopantetheine</keyword>
<keyword id="KW-0597">Phosphoprotein</keyword>
<keyword id="KW-1185">Reference proteome</keyword>
<keyword id="KW-0677">Repeat</keyword>
<reference key="1">
    <citation type="submission" date="2005-09" db="EMBL/GenBank/DDBJ databases">
        <title>Annotation of the Aspergillus terreus NIH2624 genome.</title>
        <authorList>
            <person name="Birren B.W."/>
            <person name="Lander E.S."/>
            <person name="Galagan J.E."/>
            <person name="Nusbaum C."/>
            <person name="Devon K."/>
            <person name="Henn M."/>
            <person name="Ma L.-J."/>
            <person name="Jaffe D.B."/>
            <person name="Butler J."/>
            <person name="Alvarez P."/>
            <person name="Gnerre S."/>
            <person name="Grabherr M."/>
            <person name="Kleber M."/>
            <person name="Mauceli E.W."/>
            <person name="Brockman W."/>
            <person name="Rounsley S."/>
            <person name="Young S.K."/>
            <person name="LaButti K."/>
            <person name="Pushparaj V."/>
            <person name="DeCaprio D."/>
            <person name="Crawford M."/>
            <person name="Koehrsen M."/>
            <person name="Engels R."/>
            <person name="Montgomery P."/>
            <person name="Pearson M."/>
            <person name="Howarth C."/>
            <person name="Larson L."/>
            <person name="Luoma S."/>
            <person name="White J."/>
            <person name="Alvarado L."/>
            <person name="Kodira C.D."/>
            <person name="Zeng Q."/>
            <person name="Oleary S."/>
            <person name="Yandava C."/>
            <person name="Denning D.W."/>
            <person name="Nierman W.C."/>
            <person name="Milne T."/>
            <person name="Madden K."/>
        </authorList>
    </citation>
    <scope>NUCLEOTIDE SEQUENCE [LARGE SCALE GENOMIC DNA]</scope>
    <source>
        <strain>NIH 2624 / FGSC A1156</strain>
    </source>
</reference>
<reference key="2">
    <citation type="journal article" date="2013" name="J. Am. Chem. Soc.">
        <title>Biosynthetic pathway for the epipolythiodioxopiperazine acetylaranotin in Aspergillus terreus revealed by genome-based deletion analysis.</title>
        <authorList>
            <person name="Guo C.J."/>
            <person name="Yeh H.H."/>
            <person name="Chiang Y.M."/>
            <person name="Sanchez J.F."/>
            <person name="Chang S.L."/>
            <person name="Bruno K.S."/>
            <person name="Wang C.C."/>
        </authorList>
    </citation>
    <scope>FUNCTION</scope>
    <scope>DOMAIN</scope>
    <scope>DISRUPTION PHENOTYPE</scope>
    <scope>PATHWAY</scope>
</reference>
<reference key="3">
    <citation type="journal article" date="2018" name="Fungal Genet. Biol.">
        <title>Genome-based deletion analysis in Aspergillus terreus reveals the acetylaranotin bis-thiomethyltransferase gene.</title>
        <authorList>
            <person name="Sun W.W."/>
            <person name="Romsdahl J."/>
            <person name="Guo C.J."/>
            <person name="Wang C.C.C."/>
        </authorList>
    </citation>
    <scope>FUNCTION</scope>
</reference>
<gene>
    <name evidence="6" type="primary">ataP</name>
    <name type="ORF">ATEG_03470</name>
</gene>
<sequence length="1507" mass="167139">MQINIRNEIARELNVPTTELDDSLSFTALGGHSLSALRLVSICKRIGLSLAVGELLHDIPIKDIISRSTGMYDTAGSLPILENTDPSHPDVSFNAIITPSPSPSGPSTGCPTPDTLDTTDSQDADKISIPEMQLSLIQSTLANPGNNILAYHYMCSLADLPATRMAWQQVLEAESIFRTEFRIEHEGGYLVDTGFTPYRWRDTQVPNWEALHAERDKRPSFDNVAFEFQVITVAGDNSVACILWHVHHSFIDGFSMQLVMRKVSRVVAGHPVEAGPSFATVAWERDQIIKEREADARRYWKSQKRVLEAAASEIRMPRCDFAPRSIEFWNKVATFVIDVAQSDLLGYAARHHVTVPSVYYAAWALVLSIICDSNLVLLGVVMSGRSLPVPGILDVIGSLVNTLPMGVEVELGMDTVGFINRVFRQLVQLSSFDWSPPEHGYRRQFASVLAMQFDVGGHTGTTNEPSSRMNSEIPISITVESDQVIHLQFAPEYQETQVQLMGTLFTRAISCLAAAAENPEACAARLGAQSMSYQELDRWSDCVAVHLSMYIDKGAVVCVHASPCMHWLVAIYGILKAGGVYCPLNSKLDPELRNNMFQSSGAAIYLTPSASETKYRPRASRYVWAVEDLLQRQDDNNQDEFDHIPRAEGNAYLCFTSGSTGKPKGVLCTHRGLVAFQRDLEVRLHAQPGRRIAQTMSVSFDGSIHEIFSALSYGATLVLPTPEDPFSHLYDVDSCIFTPSLAATLDPSDYPNLCYVYLVGEQVTQDINDRWAASVALYNMYGPTEATCGASIKCLLPGRKVTVGRPNPTTRIYILDRNGRLAPPGVMGQIYLAGVQVSNGYIGQSDLTNERFFPDSICCGLGERMYATGDIGYWDGDGDLICLGRNDRQIKLRGFRLDLDDLEVRISKLPGVTRAAVSRRGDDLVALVQPATACAADCRKHMAAVLPTHAIPRYIIPVERFPMTPIGKLDYRAIAQTADVRYSATPSNEMSPTEQRVAAIWADILNMDRAQISRDSNFLAAGGHSLLQLRLAGRLNRAFNCSVPITDLVKAATLRDLSQRIDKLQEQACWKAQRLPPKMDKRAISRMEREWISKYEGNTSNTSFTVSFACRLDSAVDLARLKQSWDSVMEAHQVLRSRYCACAERYERVFSDHAPVAQRIAECRVLEEINRPFDLANDDLVRVVISPDTLLVTISHIICDLTTMQLLLSDVERVYDGAEPLGHRPMYMAADAWQRVAADADLAFWTSYLQDCPHSKAKRESYAGTSRVGIVPRETVLALEDFMRSSQFSHHQLALAAVALALKPNHDRIDSVIGGPFLNRWSEADMNTIGLFLEPLPFRIQFDPKAVPNADAHAFLQSVKCSSQAAISHAVPWQELVCHLGVTPEFPNHPLFETMVTFHTKGGGLSLQIDGIEPLYTWSEGAKFGLMCEFTTLSNGDILLRLEYDQGIYAPRDISIIENRIMTALRLLIKNVPWLDLIGELHEVDGATVCVTPGHKGSLFLSPLKRT</sequence>
<protein>
    <recommendedName>
        <fullName evidence="6">Nonribosomal peptide synthetase ataP</fullName>
        <shortName evidence="6">NRPS ataP</shortName>
        <ecNumber evidence="8">6.3.2.-</ecNumber>
    </recommendedName>
    <alternativeName>
        <fullName evidence="6">Acetylaranotin biosynthesis cluster protein P</fullName>
    </alternativeName>
</protein>
<comment type="function">
    <text evidence="4 5">Nonribosomal peptide synthetase; part of the gene cluster that mediates the biosynthesis of acetylaranotin, a member of the epipolythiodioxopiperazine (ETP) class of toxins characterized by a disulfide-bridged cyclic dipeptide (PubMed:23586797). The first step of acetylaranotin biosynthesis is performed by the NRPS ataP which produces diketopiperazine cyclo-L-Phe-L-Phe via the condensation of 2 phenylalanines (L-Phe) (PubMed:23586797). The ataC domain of ataTC then catalyzes the formation of bishydroxylation of cyclo-L-Phe-L-Phe (PubMed:23586797). The glutathione S-transferase domain ataG in ataIMG further catalyzes the conjugation of two glutathiones to the bishydroxylated intermediate (PubMed:23586797). Next, the dipeptidase ataJ removes the Glu residues (PubMed:23586797). The following step is performed by the carbon sulfur lyase domain ataI of ataIMG which may convert the bis-cysteinyl adduct to yield an epidithiol intermediate (PubMed:23586797). The ataT domain from ataTC then catalyzes the oxidation of the free dithiols, followed by a cyclization step catalyzed by the cytochrome P450 ataF (PubMed:23586797). AtaF probably acts as an epoxidase to promote a dual epoxidation formation at C8 and C9 along with C8' and C9', followed by the spontaneous nucleophilic attack of the amide nitrogens N10 and N10' to yield an intermediate with the pyrrolidine partial structure (PubMed:23586797). The final steps of acetylaranotin biosynthesis involve the acetylation and ring rearrangement of an epitetrathiodiketopiperazine intermediate to produce acetylaranotin (PubMed:23586797). AtaH probably catalyzes the acetylation of epitetrathiodiketopiperazine to produce a diacetate and ataY is responsible for the formation of the dihydrooxepin moiety that converts the diacetate intermediate to acetylaranotin via acetylapoaranotin (PubMed:23586797). Both enzymes could function independently in the absence of the other (PubMed:23586797). The acetylaranotin bis-thiomethyltransferase ataS located outside of acetylaranotin gene cluster is the main thiomethyltransferase responsible for converting acetylaranotin and its related intermediates to their methylated forms (PubMed:30096370).</text>
</comment>
<comment type="pathway">
    <text evidence="4">Mycotoxin biosynthesis.</text>
</comment>
<comment type="domain">
    <text evidence="4">AtaP has the domain architecture (T1-C1-A1-T2-C2) (PubMed:23586797). The single adenylation (A) domain in ataP suggests that one specific substrate, L-Phe, is loaded onto the T (carrier) domains of ataP (PubMed:23586797).</text>
</comment>
<comment type="disruption phenotype">
    <text evidence="4">Impairs the production of acetylaranotin and of the cyclo-L-Phe-L-Phe intermediate (PubMed:23586797).</text>
</comment>
<comment type="similarity">
    <text evidence="7">Belongs to the NRP synthetase family.</text>
</comment>
<proteinExistence type="inferred from homology"/>
<accession>Q0CS64</accession>
<evidence type="ECO:0000255" key="1"/>
<evidence type="ECO:0000255" key="2">
    <source>
        <dbReference type="PROSITE-ProRule" id="PRU00258"/>
    </source>
</evidence>
<evidence type="ECO:0000256" key="3">
    <source>
        <dbReference type="SAM" id="MobiDB-lite"/>
    </source>
</evidence>
<evidence type="ECO:0000269" key="4">
    <source>
    </source>
</evidence>
<evidence type="ECO:0000269" key="5">
    <source>
    </source>
</evidence>
<evidence type="ECO:0000303" key="6">
    <source>
    </source>
</evidence>
<evidence type="ECO:0000305" key="7"/>
<evidence type="ECO:0000305" key="8">
    <source>
    </source>
</evidence>
<name>ATAP_ASPTN</name>
<feature type="chain" id="PRO_0000440656" description="Nonribosomal peptide synthetase ataP">
    <location>
        <begin position="1"/>
        <end position="1507"/>
    </location>
</feature>
<feature type="domain" description="Carrier 1" evidence="2">
    <location>
        <begin position="1"/>
        <end position="72"/>
    </location>
</feature>
<feature type="domain" description="Carrier 2" evidence="2">
    <location>
        <begin position="988"/>
        <end position="1065"/>
    </location>
</feature>
<feature type="region of interest" description="Disordered" evidence="3">
    <location>
        <begin position="98"/>
        <end position="119"/>
    </location>
</feature>
<feature type="region of interest" description="Condensation 1" evidence="1">
    <location>
        <begin position="163"/>
        <end position="429"/>
    </location>
</feature>
<feature type="region of interest" description="Adenylation" evidence="1">
    <location>
        <begin position="514"/>
        <end position="893"/>
    </location>
</feature>
<feature type="region of interest" description="Condensation 2" evidence="1">
    <location>
        <begin position="1099"/>
        <end position="1471"/>
    </location>
</feature>
<feature type="compositionally biased region" description="Low complexity" evidence="3">
    <location>
        <begin position="105"/>
        <end position="115"/>
    </location>
</feature>
<feature type="modified residue" description="O-(pantetheine 4'-phosphoryl)serine" evidence="2">
    <location>
        <position position="33"/>
    </location>
</feature>
<feature type="modified residue" description="O-(pantetheine 4'-phosphoryl)serine" evidence="2">
    <location>
        <position position="1025"/>
    </location>
</feature>
<dbReference type="EC" id="6.3.2.-" evidence="8"/>
<dbReference type="EMBL" id="CH476597">
    <property type="protein sequence ID" value="EAU36744.1"/>
    <property type="molecule type" value="Genomic_DNA"/>
</dbReference>
<dbReference type="RefSeq" id="XP_001212648.1">
    <property type="nucleotide sequence ID" value="XM_001212648.1"/>
</dbReference>
<dbReference type="SMR" id="Q0CS64"/>
<dbReference type="STRING" id="341663.Q0CS64"/>
<dbReference type="EnsemblFungi" id="EAU36744">
    <property type="protein sequence ID" value="EAU36744"/>
    <property type="gene ID" value="ATEG_03470"/>
</dbReference>
<dbReference type="GeneID" id="4318083"/>
<dbReference type="VEuPathDB" id="FungiDB:ATEG_03470"/>
<dbReference type="eggNOG" id="KOG1178">
    <property type="taxonomic scope" value="Eukaryota"/>
</dbReference>
<dbReference type="HOGENOM" id="CLU_000022_0_5_1"/>
<dbReference type="OMA" id="WTTPDNG"/>
<dbReference type="OrthoDB" id="416786at2759"/>
<dbReference type="Proteomes" id="UP000007963">
    <property type="component" value="Unassembled WGS sequence"/>
</dbReference>
<dbReference type="GO" id="GO:0005737">
    <property type="term" value="C:cytoplasm"/>
    <property type="evidence" value="ECO:0007669"/>
    <property type="project" value="TreeGrafter"/>
</dbReference>
<dbReference type="GO" id="GO:0016874">
    <property type="term" value="F:ligase activity"/>
    <property type="evidence" value="ECO:0007669"/>
    <property type="project" value="UniProtKB-KW"/>
</dbReference>
<dbReference type="GO" id="GO:0031177">
    <property type="term" value="F:phosphopantetheine binding"/>
    <property type="evidence" value="ECO:0007669"/>
    <property type="project" value="InterPro"/>
</dbReference>
<dbReference type="GO" id="GO:0043041">
    <property type="term" value="P:amino acid activation for nonribosomal peptide biosynthetic process"/>
    <property type="evidence" value="ECO:0007669"/>
    <property type="project" value="TreeGrafter"/>
</dbReference>
<dbReference type="GO" id="GO:0044550">
    <property type="term" value="P:secondary metabolite biosynthetic process"/>
    <property type="evidence" value="ECO:0007669"/>
    <property type="project" value="TreeGrafter"/>
</dbReference>
<dbReference type="CDD" id="cd19537">
    <property type="entry name" value="C_NRPS-like"/>
    <property type="match status" value="1"/>
</dbReference>
<dbReference type="Gene3D" id="3.30.300.30">
    <property type="match status" value="1"/>
</dbReference>
<dbReference type="Gene3D" id="3.40.50.980">
    <property type="match status" value="2"/>
</dbReference>
<dbReference type="Gene3D" id="1.10.1200.10">
    <property type="entry name" value="ACP-like"/>
    <property type="match status" value="2"/>
</dbReference>
<dbReference type="Gene3D" id="3.30.559.10">
    <property type="entry name" value="Chloramphenicol acetyltransferase-like domain"/>
    <property type="match status" value="2"/>
</dbReference>
<dbReference type="Gene3D" id="2.30.38.10">
    <property type="entry name" value="Luciferase, Domain 3"/>
    <property type="match status" value="1"/>
</dbReference>
<dbReference type="Gene3D" id="3.30.559.30">
    <property type="entry name" value="Nonribosomal peptide synthetase, condensation domain"/>
    <property type="match status" value="2"/>
</dbReference>
<dbReference type="InterPro" id="IPR036736">
    <property type="entry name" value="ACP-like_sf"/>
</dbReference>
<dbReference type="InterPro" id="IPR045851">
    <property type="entry name" value="AMP-bd_C_sf"/>
</dbReference>
<dbReference type="InterPro" id="IPR020845">
    <property type="entry name" value="AMP-binding_CS"/>
</dbReference>
<dbReference type="InterPro" id="IPR000873">
    <property type="entry name" value="AMP-dep_synth/lig_dom"/>
</dbReference>
<dbReference type="InterPro" id="IPR023213">
    <property type="entry name" value="CAT-like_dom_sf"/>
</dbReference>
<dbReference type="InterPro" id="IPR001242">
    <property type="entry name" value="Condensatn"/>
</dbReference>
<dbReference type="InterPro" id="IPR020806">
    <property type="entry name" value="PKS_PP-bd"/>
</dbReference>
<dbReference type="InterPro" id="IPR009081">
    <property type="entry name" value="PP-bd_ACP"/>
</dbReference>
<dbReference type="InterPro" id="IPR006162">
    <property type="entry name" value="Ppantetheine_attach_site"/>
</dbReference>
<dbReference type="PANTHER" id="PTHR45527">
    <property type="entry name" value="NONRIBOSOMAL PEPTIDE SYNTHETASE"/>
    <property type="match status" value="1"/>
</dbReference>
<dbReference type="PANTHER" id="PTHR45527:SF11">
    <property type="entry name" value="NONRIBOSOMAL PEPTIDE SYNTHETASE 5"/>
    <property type="match status" value="1"/>
</dbReference>
<dbReference type="Pfam" id="PF00501">
    <property type="entry name" value="AMP-binding"/>
    <property type="match status" value="1"/>
</dbReference>
<dbReference type="Pfam" id="PF00668">
    <property type="entry name" value="Condensation"/>
    <property type="match status" value="2"/>
</dbReference>
<dbReference type="Pfam" id="PF00550">
    <property type="entry name" value="PP-binding"/>
    <property type="match status" value="2"/>
</dbReference>
<dbReference type="SMART" id="SM00823">
    <property type="entry name" value="PKS_PP"/>
    <property type="match status" value="2"/>
</dbReference>
<dbReference type="SUPFAM" id="SSF56801">
    <property type="entry name" value="Acetyl-CoA synthetase-like"/>
    <property type="match status" value="1"/>
</dbReference>
<dbReference type="SUPFAM" id="SSF47336">
    <property type="entry name" value="ACP-like"/>
    <property type="match status" value="2"/>
</dbReference>
<dbReference type="SUPFAM" id="SSF52777">
    <property type="entry name" value="CoA-dependent acyltransferases"/>
    <property type="match status" value="4"/>
</dbReference>
<dbReference type="PROSITE" id="PS00455">
    <property type="entry name" value="AMP_BINDING"/>
    <property type="match status" value="1"/>
</dbReference>
<dbReference type="PROSITE" id="PS50075">
    <property type="entry name" value="CARRIER"/>
    <property type="match status" value="2"/>
</dbReference>
<dbReference type="PROSITE" id="PS00012">
    <property type="entry name" value="PHOSPHOPANTETHEINE"/>
    <property type="match status" value="1"/>
</dbReference>
<organism>
    <name type="scientific">Aspergillus terreus (strain NIH 2624 / FGSC A1156)</name>
    <dbReference type="NCBI Taxonomy" id="341663"/>
    <lineage>
        <taxon>Eukaryota</taxon>
        <taxon>Fungi</taxon>
        <taxon>Dikarya</taxon>
        <taxon>Ascomycota</taxon>
        <taxon>Pezizomycotina</taxon>
        <taxon>Eurotiomycetes</taxon>
        <taxon>Eurotiomycetidae</taxon>
        <taxon>Eurotiales</taxon>
        <taxon>Aspergillaceae</taxon>
        <taxon>Aspergillus</taxon>
        <taxon>Aspergillus subgen. Circumdati</taxon>
    </lineage>
</organism>